<sequence>MGSGPADEEHTVDTEPGVSPPRRTVGGRETVRAAVVVGALGVVFGDIGTSPIYTIQTVFNPEDPHPVPISTNNVYGVVSLIFWSVMLIVTATYVLLVMRADNDGEGGVMALITLLRRMGAVRGSRVTAVLAGLGIFGAALFFGDSMITPAISVLSAVEGLKVVEPGLEEWIVPITAVIIVALFSVQRRGTAAVGRLFGPVMIVWFVSIGACGVSGIARHPEILKALSPTYALSFFFGHFGIAFFALAAVVLAVTGAEALYADMGHFGRRAITRGWLVLVLPACVLSYLGQGALLLGDQSAVSSPFFLLAPGWARWPMVLLATAATVIASQAVITGAYSVASQAAQLGYLPRLRVAHTSESTIGQIYVPWINWVLMVSVLTLVFAFRSSAALAYAFGMAVTGTITITTLLFFYIVRTRWGTPLWLVVCGAGCLLAVDLLFLAANLTKLVHGAWLPLLIALTAFTVMTTWQRGRAIVTRARERAEGSLGDFVGQLHDYRPPLVRVPGTAVFLNRGKQTAPLAMRANVEHNRVLQQHVVIMSINTLPVPRVPDTERTEIDKLGYAEDGIVHVTAFFGYMDAPNIPDVLRLLDPAETEGPIAVDSASYFLSKIELTMGTAPTMATWRKRLFIATSYITADAAEYFGLPGERTVIMGSRIDV</sequence>
<comment type="function">
    <text evidence="1">Transport of potassium into the cell. Likely operates as a K(+):H(+) symporter.</text>
</comment>
<comment type="catalytic activity">
    <reaction evidence="1">
        <text>K(+)(in) + H(+)(in) = K(+)(out) + H(+)(out)</text>
        <dbReference type="Rhea" id="RHEA:28490"/>
        <dbReference type="ChEBI" id="CHEBI:15378"/>
        <dbReference type="ChEBI" id="CHEBI:29103"/>
    </reaction>
    <physiologicalReaction direction="right-to-left" evidence="1">
        <dbReference type="Rhea" id="RHEA:28492"/>
    </physiologicalReaction>
</comment>
<comment type="subcellular location">
    <subcellularLocation>
        <location evidence="1">Cell membrane</location>
        <topology evidence="1">Multi-pass membrane protein</topology>
    </subcellularLocation>
</comment>
<comment type="similarity">
    <text evidence="1">Belongs to the HAK/KUP transporter (TC 2.A.72) family.</text>
</comment>
<evidence type="ECO:0000255" key="1">
    <source>
        <dbReference type="HAMAP-Rule" id="MF_01522"/>
    </source>
</evidence>
<evidence type="ECO:0000256" key="2">
    <source>
        <dbReference type="SAM" id="MobiDB-lite"/>
    </source>
</evidence>
<accession>Q0SIZ9</accession>
<reference key="1">
    <citation type="journal article" date="2006" name="Proc. Natl. Acad. Sci. U.S.A.">
        <title>The complete genome of Rhodococcus sp. RHA1 provides insights into a catabolic powerhouse.</title>
        <authorList>
            <person name="McLeod M.P."/>
            <person name="Warren R.L."/>
            <person name="Hsiao W.W.L."/>
            <person name="Araki N."/>
            <person name="Myhre M."/>
            <person name="Fernandes C."/>
            <person name="Miyazawa D."/>
            <person name="Wong W."/>
            <person name="Lillquist A.L."/>
            <person name="Wang D."/>
            <person name="Dosanjh M."/>
            <person name="Hara H."/>
            <person name="Petrescu A."/>
            <person name="Morin R.D."/>
            <person name="Yang G."/>
            <person name="Stott J.M."/>
            <person name="Schein J.E."/>
            <person name="Shin H."/>
            <person name="Smailus D."/>
            <person name="Siddiqui A.S."/>
            <person name="Marra M.A."/>
            <person name="Jones S.J.M."/>
            <person name="Holt R."/>
            <person name="Brinkman F.S.L."/>
            <person name="Miyauchi K."/>
            <person name="Fukuda M."/>
            <person name="Davies J.E."/>
            <person name="Mohn W.W."/>
            <person name="Eltis L.D."/>
        </authorList>
    </citation>
    <scope>NUCLEOTIDE SEQUENCE [LARGE SCALE GENOMIC DNA]</scope>
    <source>
        <strain>RHA1</strain>
    </source>
</reference>
<gene>
    <name evidence="1" type="primary">kup</name>
    <name type="ordered locus">RHA1_ro00652</name>
</gene>
<name>KUP_RHOJR</name>
<protein>
    <recommendedName>
        <fullName evidence="1">Probable potassium transport system protein Kup</fullName>
    </recommendedName>
</protein>
<proteinExistence type="inferred from homology"/>
<organism>
    <name type="scientific">Rhodococcus jostii (strain RHA1)</name>
    <dbReference type="NCBI Taxonomy" id="101510"/>
    <lineage>
        <taxon>Bacteria</taxon>
        <taxon>Bacillati</taxon>
        <taxon>Actinomycetota</taxon>
        <taxon>Actinomycetes</taxon>
        <taxon>Mycobacteriales</taxon>
        <taxon>Nocardiaceae</taxon>
        <taxon>Rhodococcus</taxon>
    </lineage>
</organism>
<dbReference type="EMBL" id="CP000431">
    <property type="protein sequence ID" value="ABG92487.1"/>
    <property type="molecule type" value="Genomic_DNA"/>
</dbReference>
<dbReference type="RefSeq" id="WP_011593903.1">
    <property type="nucleotide sequence ID" value="NC_008268.1"/>
</dbReference>
<dbReference type="KEGG" id="rha:RHA1_ro00652"/>
<dbReference type="eggNOG" id="COG3158">
    <property type="taxonomic scope" value="Bacteria"/>
</dbReference>
<dbReference type="HOGENOM" id="CLU_008142_4_2_11"/>
<dbReference type="OrthoDB" id="9805577at2"/>
<dbReference type="Proteomes" id="UP000008710">
    <property type="component" value="Chromosome"/>
</dbReference>
<dbReference type="GO" id="GO:0005886">
    <property type="term" value="C:plasma membrane"/>
    <property type="evidence" value="ECO:0007669"/>
    <property type="project" value="UniProtKB-SubCell"/>
</dbReference>
<dbReference type="GO" id="GO:0015079">
    <property type="term" value="F:potassium ion transmembrane transporter activity"/>
    <property type="evidence" value="ECO:0007669"/>
    <property type="project" value="UniProtKB-UniRule"/>
</dbReference>
<dbReference type="GO" id="GO:0015293">
    <property type="term" value="F:symporter activity"/>
    <property type="evidence" value="ECO:0007669"/>
    <property type="project" value="UniProtKB-UniRule"/>
</dbReference>
<dbReference type="HAMAP" id="MF_01522">
    <property type="entry name" value="Kup"/>
    <property type="match status" value="1"/>
</dbReference>
<dbReference type="InterPro" id="IPR003855">
    <property type="entry name" value="K+_transporter"/>
</dbReference>
<dbReference type="InterPro" id="IPR053952">
    <property type="entry name" value="K_trans_C"/>
</dbReference>
<dbReference type="InterPro" id="IPR053951">
    <property type="entry name" value="K_trans_N"/>
</dbReference>
<dbReference type="InterPro" id="IPR023051">
    <property type="entry name" value="Kup"/>
</dbReference>
<dbReference type="PANTHER" id="PTHR30540:SF79">
    <property type="entry name" value="LOW AFFINITY POTASSIUM TRANSPORT SYSTEM PROTEIN KUP"/>
    <property type="match status" value="1"/>
</dbReference>
<dbReference type="PANTHER" id="PTHR30540">
    <property type="entry name" value="OSMOTIC STRESS POTASSIUM TRANSPORTER"/>
    <property type="match status" value="1"/>
</dbReference>
<dbReference type="Pfam" id="PF02705">
    <property type="entry name" value="K_trans"/>
    <property type="match status" value="1"/>
</dbReference>
<dbReference type="Pfam" id="PF22776">
    <property type="entry name" value="K_trans_C"/>
    <property type="match status" value="1"/>
</dbReference>
<keyword id="KW-1003">Cell membrane</keyword>
<keyword id="KW-0406">Ion transport</keyword>
<keyword id="KW-0472">Membrane</keyword>
<keyword id="KW-0630">Potassium</keyword>
<keyword id="KW-0633">Potassium transport</keyword>
<keyword id="KW-0769">Symport</keyword>
<keyword id="KW-0812">Transmembrane</keyword>
<keyword id="KW-1133">Transmembrane helix</keyword>
<keyword id="KW-0813">Transport</keyword>
<feature type="chain" id="PRO_0000279824" description="Probable potassium transport system protein Kup">
    <location>
        <begin position="1"/>
        <end position="657"/>
    </location>
</feature>
<feature type="transmembrane region" description="Helical" evidence="1">
    <location>
        <begin position="35"/>
        <end position="55"/>
    </location>
</feature>
<feature type="transmembrane region" description="Helical" evidence="1">
    <location>
        <begin position="77"/>
        <end position="97"/>
    </location>
</feature>
<feature type="transmembrane region" description="Helical" evidence="1">
    <location>
        <begin position="127"/>
        <end position="147"/>
    </location>
</feature>
<feature type="transmembrane region" description="Helical" evidence="1">
    <location>
        <begin position="165"/>
        <end position="185"/>
    </location>
</feature>
<feature type="transmembrane region" description="Helical" evidence="1">
    <location>
        <begin position="196"/>
        <end position="216"/>
    </location>
</feature>
<feature type="transmembrane region" description="Helical" evidence="1">
    <location>
        <begin position="234"/>
        <end position="254"/>
    </location>
</feature>
<feature type="transmembrane region" description="Helical" evidence="1">
    <location>
        <begin position="275"/>
        <end position="295"/>
    </location>
</feature>
<feature type="transmembrane region" description="Helical" evidence="1">
    <location>
        <begin position="315"/>
        <end position="335"/>
    </location>
</feature>
<feature type="transmembrane region" description="Helical" evidence="1">
    <location>
        <begin position="365"/>
        <end position="385"/>
    </location>
</feature>
<feature type="transmembrane region" description="Helical" evidence="1">
    <location>
        <begin position="394"/>
        <end position="414"/>
    </location>
</feature>
<feature type="transmembrane region" description="Helical" evidence="1">
    <location>
        <begin position="422"/>
        <end position="442"/>
    </location>
</feature>
<feature type="transmembrane region" description="Helical" evidence="1">
    <location>
        <begin position="447"/>
        <end position="467"/>
    </location>
</feature>
<feature type="region of interest" description="Disordered" evidence="2">
    <location>
        <begin position="1"/>
        <end position="25"/>
    </location>
</feature>